<feature type="chain" id="PRO_0000431003" description="Putative uncharacterized membrane protein YER148W-A">
    <location>
        <begin position="1"/>
        <end position="192"/>
    </location>
</feature>
<feature type="transmembrane region" description="Helical; Signal-anchor" evidence="1">
    <location>
        <begin position="7"/>
        <end position="29"/>
    </location>
</feature>
<feature type="transmembrane region" description="Helical" evidence="1">
    <location>
        <begin position="51"/>
        <end position="67"/>
    </location>
</feature>
<evidence type="ECO:0000255" key="1"/>
<evidence type="ECO:0000305" key="2"/>
<evidence type="ECO:0000305" key="3">
    <source>
    </source>
</evidence>
<evidence type="ECO:0000312" key="4">
    <source>
        <dbReference type="SGD" id="S000028760"/>
    </source>
</evidence>
<sequence length="192" mass="20823">MFYNKMFIHSISGGSSLLSASEVFASAFFSKASSLSSLNLCSRSSDNSFSYFLCVLVSTFLNSLVIIESERDPEPLVGLPTEEGELGSQVTGELAGDDMPKLCLLEFSLLLAFSSSLFSCSNSCNFFSVLLKFEWLFNNLSCNSLLVRVSFSISCTYSARSFSNCLVKKLCASCKSLNAVSSSSNFLEESSS</sequence>
<proteinExistence type="uncertain"/>
<gene>
    <name evidence="4" type="ordered locus">YER148W-A</name>
</gene>
<organism>
    <name type="scientific">Saccharomyces cerevisiae (strain ATCC 204508 / S288c)</name>
    <name type="common">Baker's yeast</name>
    <dbReference type="NCBI Taxonomy" id="559292"/>
    <lineage>
        <taxon>Eukaryota</taxon>
        <taxon>Fungi</taxon>
        <taxon>Dikarya</taxon>
        <taxon>Ascomycota</taxon>
        <taxon>Saccharomycotina</taxon>
        <taxon>Saccharomycetes</taxon>
        <taxon>Saccharomycetales</taxon>
        <taxon>Saccharomycetaceae</taxon>
        <taxon>Saccharomyces</taxon>
    </lineage>
</organism>
<protein>
    <recommendedName>
        <fullName evidence="2">Putative uncharacterized membrane protein YER148W-A</fullName>
    </recommendedName>
</protein>
<accession>A0A023PXK2</accession>
<reference key="1">
    <citation type="journal article" date="1997" name="Nature">
        <title>The nucleotide sequence of Saccharomyces cerevisiae chromosome V.</title>
        <authorList>
            <person name="Dietrich F.S."/>
            <person name="Mulligan J.T."/>
            <person name="Hennessy K.M."/>
            <person name="Yelton M.A."/>
            <person name="Allen E."/>
            <person name="Araujo R."/>
            <person name="Aviles E."/>
            <person name="Berno A."/>
            <person name="Brennan T."/>
            <person name="Carpenter J."/>
            <person name="Chen E."/>
            <person name="Cherry J.M."/>
            <person name="Chung E."/>
            <person name="Duncan M."/>
            <person name="Guzman E."/>
            <person name="Hartzell G."/>
            <person name="Hunicke-Smith S."/>
            <person name="Hyman R.W."/>
            <person name="Kayser A."/>
            <person name="Komp C."/>
            <person name="Lashkari D."/>
            <person name="Lew H."/>
            <person name="Lin D."/>
            <person name="Mosedale D."/>
            <person name="Nakahara K."/>
            <person name="Namath A."/>
            <person name="Norgren R."/>
            <person name="Oefner P."/>
            <person name="Oh C."/>
            <person name="Petel F.X."/>
            <person name="Roberts D."/>
            <person name="Sehl P."/>
            <person name="Schramm S."/>
            <person name="Shogren T."/>
            <person name="Smith V."/>
            <person name="Taylor P."/>
            <person name="Wei Y."/>
            <person name="Botstein D."/>
            <person name="Davis R.W."/>
        </authorList>
    </citation>
    <scope>NUCLEOTIDE SEQUENCE [LARGE SCALE GENOMIC DNA]</scope>
    <source>
        <strain>ATCC 204508 / S288c</strain>
    </source>
</reference>
<reference key="2">
    <citation type="journal article" date="2014" name="G3 (Bethesda)">
        <title>The reference genome sequence of Saccharomyces cerevisiae: Then and now.</title>
        <authorList>
            <person name="Engel S.R."/>
            <person name="Dietrich F.S."/>
            <person name="Fisk D.G."/>
            <person name="Binkley G."/>
            <person name="Balakrishnan R."/>
            <person name="Costanzo M.C."/>
            <person name="Dwight S.S."/>
            <person name="Hitz B.C."/>
            <person name="Karra K."/>
            <person name="Nash R.S."/>
            <person name="Weng S."/>
            <person name="Wong E.D."/>
            <person name="Lloyd P."/>
            <person name="Skrzypek M.S."/>
            <person name="Miyasato S.R."/>
            <person name="Simison M."/>
            <person name="Cherry J.M."/>
        </authorList>
    </citation>
    <scope>GENOME REANNOTATION</scope>
    <source>
        <strain>ATCC 204508 / S288c</strain>
    </source>
</reference>
<comment type="subcellular location">
    <subcellularLocation>
        <location evidence="1">Membrane</location>
        <topology evidence="1">Multi-pass membrane protein</topology>
    </subcellularLocation>
</comment>
<comment type="miscellaneous">
    <text evidence="2">Partially overlaps PEA2.</text>
</comment>
<comment type="caution">
    <text evidence="3">Product of a dubious gene prediction unlikely to encode a functional protein. Because of that it is not part of the S.cerevisiae S288c complete/reference proteome set.</text>
</comment>
<dbReference type="EMBL" id="KJ412242">
    <property type="protein sequence ID" value="AHX39285.1"/>
    <property type="molecule type" value="Genomic_DNA"/>
</dbReference>
<dbReference type="PaxDb" id="4932-YER148W-A"/>
<dbReference type="EnsemblFungi" id="YER148W-A_mRNA">
    <property type="protein sequence ID" value="YER148W-A"/>
    <property type="gene ID" value="YER148W-A"/>
</dbReference>
<dbReference type="AGR" id="SGD:S000028760"/>
<dbReference type="SGD" id="S000028760">
    <property type="gene designation" value="YER148W-A"/>
</dbReference>
<dbReference type="HOGENOM" id="CLU_1415925_0_0_1"/>
<dbReference type="GO" id="GO:0016020">
    <property type="term" value="C:membrane"/>
    <property type="evidence" value="ECO:0007669"/>
    <property type="project" value="UniProtKB-SubCell"/>
</dbReference>
<keyword id="KW-0472">Membrane</keyword>
<keyword id="KW-0735">Signal-anchor</keyword>
<keyword id="KW-0812">Transmembrane</keyword>
<keyword id="KW-1133">Transmembrane helix</keyword>
<name>YE148_YEAST</name>